<organism>
    <name type="scientific">Clostridium perfringens (strain ATCC 13124 / DSM 756 / JCM 1290 / NCIMB 6125 / NCTC 8237 / Type A)</name>
    <dbReference type="NCBI Taxonomy" id="195103"/>
    <lineage>
        <taxon>Bacteria</taxon>
        <taxon>Bacillati</taxon>
        <taxon>Bacillota</taxon>
        <taxon>Clostridia</taxon>
        <taxon>Eubacteriales</taxon>
        <taxon>Clostridiaceae</taxon>
        <taxon>Clostridium</taxon>
    </lineage>
</organism>
<reference key="1">
    <citation type="journal article" date="2006" name="Genome Res.">
        <title>Skewed genomic variability in strains of the toxigenic bacterial pathogen, Clostridium perfringens.</title>
        <authorList>
            <person name="Myers G.S.A."/>
            <person name="Rasko D.A."/>
            <person name="Cheung J.K."/>
            <person name="Ravel J."/>
            <person name="Seshadri R."/>
            <person name="DeBoy R.T."/>
            <person name="Ren Q."/>
            <person name="Varga J."/>
            <person name="Awad M.M."/>
            <person name="Brinkac L.M."/>
            <person name="Daugherty S.C."/>
            <person name="Haft D.H."/>
            <person name="Dodson R.J."/>
            <person name="Madupu R."/>
            <person name="Nelson W.C."/>
            <person name="Rosovitz M.J."/>
            <person name="Sullivan S.A."/>
            <person name="Khouri H."/>
            <person name="Dimitrov G.I."/>
            <person name="Watkins K.L."/>
            <person name="Mulligan S."/>
            <person name="Benton J."/>
            <person name="Radune D."/>
            <person name="Fisher D.J."/>
            <person name="Atkins H.S."/>
            <person name="Hiscox T."/>
            <person name="Jost B.H."/>
            <person name="Billington S.J."/>
            <person name="Songer J.G."/>
            <person name="McClane B.A."/>
            <person name="Titball R.W."/>
            <person name="Rood J.I."/>
            <person name="Melville S.B."/>
            <person name="Paulsen I.T."/>
        </authorList>
    </citation>
    <scope>NUCLEOTIDE SEQUENCE [LARGE SCALE GENOMIC DNA]</scope>
    <source>
        <strain>ATCC 13124 / DSM 756 / JCM 1290 / NCIMB 6125 / NCTC 8237 / S 107 / Type A</strain>
    </source>
</reference>
<feature type="chain" id="PRO_0000256896" description="Chaperonin GroEL">
    <location>
        <begin position="1"/>
        <end position="539"/>
    </location>
</feature>
<feature type="binding site" evidence="1">
    <location>
        <begin position="29"/>
        <end position="32"/>
    </location>
    <ligand>
        <name>ATP</name>
        <dbReference type="ChEBI" id="CHEBI:30616"/>
    </ligand>
</feature>
<feature type="binding site" evidence="1">
    <location>
        <begin position="86"/>
        <end position="90"/>
    </location>
    <ligand>
        <name>ATP</name>
        <dbReference type="ChEBI" id="CHEBI:30616"/>
    </ligand>
</feature>
<feature type="binding site" evidence="1">
    <location>
        <position position="413"/>
    </location>
    <ligand>
        <name>ATP</name>
        <dbReference type="ChEBI" id="CHEBI:30616"/>
    </ligand>
</feature>
<feature type="binding site" evidence="1">
    <location>
        <begin position="477"/>
        <end position="479"/>
    </location>
    <ligand>
        <name>ATP</name>
        <dbReference type="ChEBI" id="CHEBI:30616"/>
    </ligand>
</feature>
<feature type="binding site" evidence="1">
    <location>
        <position position="493"/>
    </location>
    <ligand>
        <name>ATP</name>
        <dbReference type="ChEBI" id="CHEBI:30616"/>
    </ligand>
</feature>
<accession>Q0TN27</accession>
<dbReference type="EC" id="5.6.1.7" evidence="1"/>
<dbReference type="EMBL" id="CP000246">
    <property type="protein sequence ID" value="ABG82861.1"/>
    <property type="molecule type" value="Genomic_DNA"/>
</dbReference>
<dbReference type="RefSeq" id="WP_003454479.1">
    <property type="nucleotide sequence ID" value="NC_008261.1"/>
</dbReference>
<dbReference type="SMR" id="Q0TN27"/>
<dbReference type="STRING" id="195103.CPF_2573"/>
<dbReference type="PaxDb" id="195103-CPF_2573"/>
<dbReference type="GeneID" id="93001148"/>
<dbReference type="KEGG" id="cpf:CPF_2573"/>
<dbReference type="eggNOG" id="COG0459">
    <property type="taxonomic scope" value="Bacteria"/>
</dbReference>
<dbReference type="HOGENOM" id="CLU_016503_6_1_9"/>
<dbReference type="Proteomes" id="UP000001823">
    <property type="component" value="Chromosome"/>
</dbReference>
<dbReference type="GO" id="GO:0005737">
    <property type="term" value="C:cytoplasm"/>
    <property type="evidence" value="ECO:0007669"/>
    <property type="project" value="UniProtKB-SubCell"/>
</dbReference>
<dbReference type="GO" id="GO:0005524">
    <property type="term" value="F:ATP binding"/>
    <property type="evidence" value="ECO:0007669"/>
    <property type="project" value="UniProtKB-UniRule"/>
</dbReference>
<dbReference type="GO" id="GO:0140662">
    <property type="term" value="F:ATP-dependent protein folding chaperone"/>
    <property type="evidence" value="ECO:0007669"/>
    <property type="project" value="InterPro"/>
</dbReference>
<dbReference type="GO" id="GO:0016853">
    <property type="term" value="F:isomerase activity"/>
    <property type="evidence" value="ECO:0007669"/>
    <property type="project" value="UniProtKB-KW"/>
</dbReference>
<dbReference type="GO" id="GO:0051082">
    <property type="term" value="F:unfolded protein binding"/>
    <property type="evidence" value="ECO:0007669"/>
    <property type="project" value="UniProtKB-UniRule"/>
</dbReference>
<dbReference type="GO" id="GO:0042026">
    <property type="term" value="P:protein refolding"/>
    <property type="evidence" value="ECO:0007669"/>
    <property type="project" value="UniProtKB-UniRule"/>
</dbReference>
<dbReference type="CDD" id="cd03344">
    <property type="entry name" value="GroEL"/>
    <property type="match status" value="1"/>
</dbReference>
<dbReference type="FunFam" id="3.50.7.10:FF:000001">
    <property type="entry name" value="60 kDa chaperonin"/>
    <property type="match status" value="1"/>
</dbReference>
<dbReference type="Gene3D" id="3.50.7.10">
    <property type="entry name" value="GroEL"/>
    <property type="match status" value="1"/>
</dbReference>
<dbReference type="Gene3D" id="1.10.560.10">
    <property type="entry name" value="GroEL-like equatorial domain"/>
    <property type="match status" value="1"/>
</dbReference>
<dbReference type="Gene3D" id="3.30.260.10">
    <property type="entry name" value="TCP-1-like chaperonin intermediate domain"/>
    <property type="match status" value="1"/>
</dbReference>
<dbReference type="HAMAP" id="MF_00600">
    <property type="entry name" value="CH60"/>
    <property type="match status" value="1"/>
</dbReference>
<dbReference type="InterPro" id="IPR018370">
    <property type="entry name" value="Chaperonin_Cpn60_CS"/>
</dbReference>
<dbReference type="InterPro" id="IPR001844">
    <property type="entry name" value="Cpn60/GroEL"/>
</dbReference>
<dbReference type="InterPro" id="IPR002423">
    <property type="entry name" value="Cpn60/GroEL/TCP-1"/>
</dbReference>
<dbReference type="InterPro" id="IPR027409">
    <property type="entry name" value="GroEL-like_apical_dom_sf"/>
</dbReference>
<dbReference type="InterPro" id="IPR027413">
    <property type="entry name" value="GROEL-like_equatorial_sf"/>
</dbReference>
<dbReference type="InterPro" id="IPR027410">
    <property type="entry name" value="TCP-1-like_intermed_sf"/>
</dbReference>
<dbReference type="NCBIfam" id="TIGR02348">
    <property type="entry name" value="GroEL"/>
    <property type="match status" value="1"/>
</dbReference>
<dbReference type="NCBIfam" id="NF000592">
    <property type="entry name" value="PRK00013.1"/>
    <property type="match status" value="1"/>
</dbReference>
<dbReference type="NCBIfam" id="NF009487">
    <property type="entry name" value="PRK12849.1"/>
    <property type="match status" value="1"/>
</dbReference>
<dbReference type="NCBIfam" id="NF009488">
    <property type="entry name" value="PRK12850.1"/>
    <property type="match status" value="1"/>
</dbReference>
<dbReference type="NCBIfam" id="NF009489">
    <property type="entry name" value="PRK12851.1"/>
    <property type="match status" value="1"/>
</dbReference>
<dbReference type="PANTHER" id="PTHR45633">
    <property type="entry name" value="60 KDA HEAT SHOCK PROTEIN, MITOCHONDRIAL"/>
    <property type="match status" value="1"/>
</dbReference>
<dbReference type="Pfam" id="PF00118">
    <property type="entry name" value="Cpn60_TCP1"/>
    <property type="match status" value="1"/>
</dbReference>
<dbReference type="PRINTS" id="PR00298">
    <property type="entry name" value="CHAPERONIN60"/>
</dbReference>
<dbReference type="SUPFAM" id="SSF52029">
    <property type="entry name" value="GroEL apical domain-like"/>
    <property type="match status" value="1"/>
</dbReference>
<dbReference type="SUPFAM" id="SSF48592">
    <property type="entry name" value="GroEL equatorial domain-like"/>
    <property type="match status" value="1"/>
</dbReference>
<dbReference type="SUPFAM" id="SSF54849">
    <property type="entry name" value="GroEL-intermediate domain like"/>
    <property type="match status" value="1"/>
</dbReference>
<dbReference type="PROSITE" id="PS00296">
    <property type="entry name" value="CHAPERONINS_CPN60"/>
    <property type="match status" value="1"/>
</dbReference>
<keyword id="KW-0067">ATP-binding</keyword>
<keyword id="KW-0143">Chaperone</keyword>
<keyword id="KW-0963">Cytoplasm</keyword>
<keyword id="KW-0413">Isomerase</keyword>
<keyword id="KW-0547">Nucleotide-binding</keyword>
<gene>
    <name evidence="1" type="primary">groEL</name>
    <name evidence="1" type="synonym">groL</name>
    <name type="ordered locus">CPF_2573</name>
</gene>
<sequence length="539" mass="57381">MAKTLLFGEEARRSMQAGVDKLANTVKVTLGPKGRNVILDKKFGSPLITNDGVTIAREIELEDAYENMGAQLVKEVATKTNDVAGDGTTTATLLAQAIIREGLKNVTAGANPILIRNGIKTAVEKAVEEIQKISKPVNGKEDIARVAAISAADEKIGKLIADAMEKVGNEGVITVEESKSMGTELDVVEGMQFDRGYVSAYMVTDTEKMEAVLDNPLVLITDKKISNIQDLLPLLEQIVQAGKKLLIIADDIEGEAMTTLVVNKLRGTFTCVGVKAPGFGDRRKEMLQDIATLTGGVVISDEVGGDLKEATLDMLGEAESVKVTKESTTIVNGRGNSEEIKNRINQIKLQLEATTSEFDKEKLQERLAKLAGGVAVVKVGAATETELKESKLRIEDALAATKAAVEEGIVPGGGTAYVNVINEVAKLTSDIQDEQVGINIIVRSLEEPMRQIAHNAGLEGSVIIEKVKNSDAGVGFDALRGEYKDMIKAGIVDPTKVTRSALQNAASVASTFLTTEAAVADIPEKEMPQGAGMGMDGMY</sequence>
<name>CH60_CLOP1</name>
<comment type="function">
    <text evidence="1">Together with its co-chaperonin GroES, plays an essential role in assisting protein folding. The GroEL-GroES system forms a nano-cage that allows encapsulation of the non-native substrate proteins and provides a physical environment optimized to promote and accelerate protein folding.</text>
</comment>
<comment type="catalytic activity">
    <reaction evidence="1">
        <text>ATP + H2O + a folded polypeptide = ADP + phosphate + an unfolded polypeptide.</text>
        <dbReference type="EC" id="5.6.1.7"/>
    </reaction>
</comment>
<comment type="subunit">
    <text evidence="1">Forms a cylinder of 14 subunits composed of two heptameric rings stacked back-to-back. Interacts with the co-chaperonin GroES.</text>
</comment>
<comment type="subcellular location">
    <subcellularLocation>
        <location evidence="1">Cytoplasm</location>
    </subcellularLocation>
</comment>
<comment type="similarity">
    <text evidence="1">Belongs to the chaperonin (HSP60) family.</text>
</comment>
<proteinExistence type="inferred from homology"/>
<evidence type="ECO:0000255" key="1">
    <source>
        <dbReference type="HAMAP-Rule" id="MF_00600"/>
    </source>
</evidence>
<protein>
    <recommendedName>
        <fullName evidence="1">Chaperonin GroEL</fullName>
        <ecNumber evidence="1">5.6.1.7</ecNumber>
    </recommendedName>
    <alternativeName>
        <fullName evidence="1">60 kDa chaperonin</fullName>
    </alternativeName>
    <alternativeName>
        <fullName evidence="1">Chaperonin-60</fullName>
        <shortName evidence="1">Cpn60</shortName>
    </alternativeName>
</protein>